<keyword id="KW-0997">Cell inner membrane</keyword>
<keyword id="KW-1003">Cell membrane</keyword>
<keyword id="KW-0472">Membrane</keyword>
<keyword id="KW-1185">Reference proteome</keyword>
<keyword id="KW-0732">Signal</keyword>
<keyword id="KW-0813">Transport</keyword>
<dbReference type="EMBL" id="CP001063">
    <property type="protein sequence ID" value="ACD06502.1"/>
    <property type="molecule type" value="Genomic_DNA"/>
</dbReference>
<dbReference type="RefSeq" id="WP_000678969.1">
    <property type="nucleotide sequence ID" value="NC_010658.1"/>
</dbReference>
<dbReference type="SMR" id="B2TYA9"/>
<dbReference type="STRING" id="344609.SbBS512_E1159"/>
<dbReference type="KEGG" id="sbc:SbBS512_E1159"/>
<dbReference type="HOGENOM" id="CLU_018816_2_0_6"/>
<dbReference type="Proteomes" id="UP000001030">
    <property type="component" value="Chromosome"/>
</dbReference>
<dbReference type="GO" id="GO:1990281">
    <property type="term" value="C:efflux pump complex"/>
    <property type="evidence" value="ECO:0007669"/>
    <property type="project" value="TreeGrafter"/>
</dbReference>
<dbReference type="GO" id="GO:0005886">
    <property type="term" value="C:plasma membrane"/>
    <property type="evidence" value="ECO:0007669"/>
    <property type="project" value="UniProtKB-SubCell"/>
</dbReference>
<dbReference type="GO" id="GO:0015562">
    <property type="term" value="F:efflux transmembrane transporter activity"/>
    <property type="evidence" value="ECO:0007669"/>
    <property type="project" value="TreeGrafter"/>
</dbReference>
<dbReference type="FunFam" id="2.40.420.20:FF:000001">
    <property type="entry name" value="Efflux RND transporter periplasmic adaptor subunit"/>
    <property type="match status" value="1"/>
</dbReference>
<dbReference type="FunFam" id="1.10.287.470:FF:000005">
    <property type="entry name" value="Multidrug resistance protein MdtA"/>
    <property type="match status" value="1"/>
</dbReference>
<dbReference type="FunFam" id="2.40.30.170:FF:000006">
    <property type="entry name" value="Multidrug resistance protein MdtA"/>
    <property type="match status" value="1"/>
</dbReference>
<dbReference type="Gene3D" id="2.40.30.170">
    <property type="match status" value="1"/>
</dbReference>
<dbReference type="Gene3D" id="2.40.420.20">
    <property type="match status" value="1"/>
</dbReference>
<dbReference type="Gene3D" id="2.40.50.100">
    <property type="match status" value="1"/>
</dbReference>
<dbReference type="Gene3D" id="1.10.287.470">
    <property type="entry name" value="Helix hairpin bin"/>
    <property type="match status" value="1"/>
</dbReference>
<dbReference type="HAMAP" id="MF_01422">
    <property type="entry name" value="MdtA"/>
    <property type="match status" value="1"/>
</dbReference>
<dbReference type="InterPro" id="IPR032317">
    <property type="entry name" value="CusB_D23"/>
</dbReference>
<dbReference type="InterPro" id="IPR022824">
    <property type="entry name" value="Multidrug-R_MdtA"/>
</dbReference>
<dbReference type="InterPro" id="IPR006143">
    <property type="entry name" value="RND_pump_MFP"/>
</dbReference>
<dbReference type="NCBIfam" id="NF008589">
    <property type="entry name" value="PRK11556.1"/>
    <property type="match status" value="1"/>
</dbReference>
<dbReference type="NCBIfam" id="TIGR01730">
    <property type="entry name" value="RND_mfp"/>
    <property type="match status" value="1"/>
</dbReference>
<dbReference type="PANTHER" id="PTHR30469">
    <property type="entry name" value="MULTIDRUG RESISTANCE PROTEIN MDTA"/>
    <property type="match status" value="1"/>
</dbReference>
<dbReference type="PANTHER" id="PTHR30469:SF12">
    <property type="entry name" value="MULTIDRUG RESISTANCE PROTEIN MDTA"/>
    <property type="match status" value="1"/>
</dbReference>
<dbReference type="Pfam" id="PF16576">
    <property type="entry name" value="HlyD_D23"/>
    <property type="match status" value="1"/>
</dbReference>
<dbReference type="SUPFAM" id="SSF111369">
    <property type="entry name" value="HlyD-like secretion proteins"/>
    <property type="match status" value="1"/>
</dbReference>
<reference key="1">
    <citation type="submission" date="2008-05" db="EMBL/GenBank/DDBJ databases">
        <title>Complete sequence of Shigella boydii serotype 18 strain BS512.</title>
        <authorList>
            <person name="Rasko D.A."/>
            <person name="Rosovitz M."/>
            <person name="Maurelli A.T."/>
            <person name="Myers G."/>
            <person name="Seshadri R."/>
            <person name="Cer R."/>
            <person name="Jiang L."/>
            <person name="Ravel J."/>
            <person name="Sebastian Y."/>
        </authorList>
    </citation>
    <scope>NUCLEOTIDE SEQUENCE [LARGE SCALE GENOMIC DNA]</scope>
    <source>
        <strain>CDC 3083-94 / BS512</strain>
    </source>
</reference>
<gene>
    <name evidence="1" type="primary">mdtA</name>
    <name type="ordered locus">SbBS512_E1159</name>
</gene>
<proteinExistence type="inferred from homology"/>
<name>MDTA_SHIB3</name>
<feature type="signal peptide" evidence="1">
    <location>
        <begin position="1"/>
        <end position="21"/>
    </location>
</feature>
<feature type="chain" id="PRO_1000145644" description="Multidrug resistance protein MdtA">
    <location>
        <begin position="22"/>
        <end position="415"/>
    </location>
</feature>
<feature type="region of interest" description="Disordered" evidence="2">
    <location>
        <begin position="31"/>
        <end position="60"/>
    </location>
</feature>
<feature type="region of interest" description="Disordered" evidence="2">
    <location>
        <begin position="392"/>
        <end position="415"/>
    </location>
</feature>
<feature type="compositionally biased region" description="Polar residues" evidence="2">
    <location>
        <begin position="31"/>
        <end position="47"/>
    </location>
</feature>
<feature type="compositionally biased region" description="Basic and acidic residues" evidence="2">
    <location>
        <begin position="399"/>
        <end position="415"/>
    </location>
</feature>
<evidence type="ECO:0000255" key="1">
    <source>
        <dbReference type="HAMAP-Rule" id="MF_01422"/>
    </source>
</evidence>
<evidence type="ECO:0000256" key="2">
    <source>
        <dbReference type="SAM" id="MobiDB-lite"/>
    </source>
</evidence>
<protein>
    <recommendedName>
        <fullName evidence="1">Multidrug resistance protein MdtA</fullName>
    </recommendedName>
    <alternativeName>
        <fullName evidence="1">Multidrug transporter MdtA</fullName>
    </alternativeName>
</protein>
<accession>B2TYA9</accession>
<sequence>MKGSYKSRWVIVIVVVIAAIAAFWFWQGRNDSQSAAPGATKQAQQSPAGGRRGMRSGPLAPVQAATAVEQAVPRYLTGLGTITAANTVTVRSRVDGQLMALHFQEGQQVKAGDLLAEIDPSQFKVALAQAQGQLAKDKATLTNARRDLARYQQLAKTNLVSRQELDAQQALVSETEGTIKADEASVASAQLQLDWSRITAPVDGRVGLKQVDVGNQISSGDTTGIVVITQTHPIDLLFTLPESDIATVVQAQKAGKPLVVEAWDRTNSKKLSEGTLLSLDNQIDATTGTIKVKARFNNQDDALFPNQFVNARMLVDTEQNAVVIPTAALQMGNEGHFVWVLNSENKVSKHLVTPGIQDSQKVVIRAGISAGDRVVTDGIDRLTEGAKVEVVEAQSATTPEEKATSREYAKKGARS</sequence>
<organism>
    <name type="scientific">Shigella boydii serotype 18 (strain CDC 3083-94 / BS512)</name>
    <dbReference type="NCBI Taxonomy" id="344609"/>
    <lineage>
        <taxon>Bacteria</taxon>
        <taxon>Pseudomonadati</taxon>
        <taxon>Pseudomonadota</taxon>
        <taxon>Gammaproteobacteria</taxon>
        <taxon>Enterobacterales</taxon>
        <taxon>Enterobacteriaceae</taxon>
        <taxon>Shigella</taxon>
    </lineage>
</organism>
<comment type="subunit">
    <text evidence="1">Part of a tripartite efflux system composed of MdtA, MdtB and MdtC.</text>
</comment>
<comment type="subcellular location">
    <subcellularLocation>
        <location evidence="1">Cell inner membrane</location>
        <topology evidence="1">Peripheral membrane protein</topology>
    </subcellularLocation>
</comment>
<comment type="similarity">
    <text evidence="1">Belongs to the membrane fusion protein (MFP) (TC 8.A.1) family.</text>
</comment>